<protein>
    <recommendedName>
        <fullName evidence="1">Small ribosomal subunit protein uS14</fullName>
    </recommendedName>
    <alternativeName>
        <fullName evidence="2">30S ribosomal protein S14</fullName>
    </alternativeName>
</protein>
<sequence>MAKKGMINRELKREKTVAKYAVKRAELKATIANVNASDEERFEAMLKLQALPRNASPVRLRNRCGLTGRPHGYFRKFGLSRNKLRDTVMQGDVPGVVKASW</sequence>
<name>RS14_ACIBS</name>
<keyword id="KW-0687">Ribonucleoprotein</keyword>
<keyword id="KW-0689">Ribosomal protein</keyword>
<keyword id="KW-0694">RNA-binding</keyword>
<keyword id="KW-0699">rRNA-binding</keyword>
<evidence type="ECO:0000255" key="1">
    <source>
        <dbReference type="HAMAP-Rule" id="MF_00537"/>
    </source>
</evidence>
<evidence type="ECO:0000305" key="2"/>
<dbReference type="EMBL" id="CU468230">
    <property type="protein sequence ID" value="CAO99827.1"/>
    <property type="molecule type" value="Genomic_DNA"/>
</dbReference>
<dbReference type="SMR" id="B0VQT1"/>
<dbReference type="KEGG" id="abm:ABSDF0436"/>
<dbReference type="HOGENOM" id="CLU_139869_0_1_6"/>
<dbReference type="Proteomes" id="UP000001741">
    <property type="component" value="Chromosome"/>
</dbReference>
<dbReference type="GO" id="GO:0005737">
    <property type="term" value="C:cytoplasm"/>
    <property type="evidence" value="ECO:0007669"/>
    <property type="project" value="UniProtKB-ARBA"/>
</dbReference>
<dbReference type="GO" id="GO:0015935">
    <property type="term" value="C:small ribosomal subunit"/>
    <property type="evidence" value="ECO:0007669"/>
    <property type="project" value="TreeGrafter"/>
</dbReference>
<dbReference type="GO" id="GO:0019843">
    <property type="term" value="F:rRNA binding"/>
    <property type="evidence" value="ECO:0007669"/>
    <property type="project" value="UniProtKB-UniRule"/>
</dbReference>
<dbReference type="GO" id="GO:0003735">
    <property type="term" value="F:structural constituent of ribosome"/>
    <property type="evidence" value="ECO:0007669"/>
    <property type="project" value="InterPro"/>
</dbReference>
<dbReference type="GO" id="GO:0006412">
    <property type="term" value="P:translation"/>
    <property type="evidence" value="ECO:0007669"/>
    <property type="project" value="UniProtKB-UniRule"/>
</dbReference>
<dbReference type="FunFam" id="1.10.287.1480:FF:000001">
    <property type="entry name" value="30S ribosomal protein S14"/>
    <property type="match status" value="1"/>
</dbReference>
<dbReference type="Gene3D" id="1.10.287.1480">
    <property type="match status" value="1"/>
</dbReference>
<dbReference type="HAMAP" id="MF_00537">
    <property type="entry name" value="Ribosomal_uS14_1"/>
    <property type="match status" value="1"/>
</dbReference>
<dbReference type="InterPro" id="IPR001209">
    <property type="entry name" value="Ribosomal_uS14"/>
</dbReference>
<dbReference type="InterPro" id="IPR023036">
    <property type="entry name" value="Ribosomal_uS14_bac/plastid"/>
</dbReference>
<dbReference type="InterPro" id="IPR018271">
    <property type="entry name" value="Ribosomal_uS14_CS"/>
</dbReference>
<dbReference type="NCBIfam" id="NF006477">
    <property type="entry name" value="PRK08881.1"/>
    <property type="match status" value="1"/>
</dbReference>
<dbReference type="PANTHER" id="PTHR19836">
    <property type="entry name" value="30S RIBOSOMAL PROTEIN S14"/>
    <property type="match status" value="1"/>
</dbReference>
<dbReference type="PANTHER" id="PTHR19836:SF19">
    <property type="entry name" value="SMALL RIBOSOMAL SUBUNIT PROTEIN US14M"/>
    <property type="match status" value="1"/>
</dbReference>
<dbReference type="Pfam" id="PF00253">
    <property type="entry name" value="Ribosomal_S14"/>
    <property type="match status" value="1"/>
</dbReference>
<dbReference type="SUPFAM" id="SSF57716">
    <property type="entry name" value="Glucocorticoid receptor-like (DNA-binding domain)"/>
    <property type="match status" value="1"/>
</dbReference>
<dbReference type="PROSITE" id="PS00527">
    <property type="entry name" value="RIBOSOMAL_S14"/>
    <property type="match status" value="1"/>
</dbReference>
<comment type="function">
    <text evidence="1">Binds 16S rRNA, required for the assembly of 30S particles and may also be responsible for determining the conformation of the 16S rRNA at the A site.</text>
</comment>
<comment type="subunit">
    <text evidence="1">Part of the 30S ribosomal subunit. Contacts proteins S3 and S10.</text>
</comment>
<comment type="similarity">
    <text evidence="1">Belongs to the universal ribosomal protein uS14 family.</text>
</comment>
<gene>
    <name evidence="1" type="primary">rpsN</name>
    <name type="ordered locus">ABSDF0436</name>
</gene>
<reference key="1">
    <citation type="journal article" date="2008" name="PLoS ONE">
        <title>Comparative analysis of Acinetobacters: three genomes for three lifestyles.</title>
        <authorList>
            <person name="Vallenet D."/>
            <person name="Nordmann P."/>
            <person name="Barbe V."/>
            <person name="Poirel L."/>
            <person name="Mangenot S."/>
            <person name="Bataille E."/>
            <person name="Dossat C."/>
            <person name="Gas S."/>
            <person name="Kreimeyer A."/>
            <person name="Lenoble P."/>
            <person name="Oztas S."/>
            <person name="Poulain J."/>
            <person name="Segurens B."/>
            <person name="Robert C."/>
            <person name="Abergel C."/>
            <person name="Claverie J.-M."/>
            <person name="Raoult D."/>
            <person name="Medigue C."/>
            <person name="Weissenbach J."/>
            <person name="Cruveiller S."/>
        </authorList>
    </citation>
    <scope>NUCLEOTIDE SEQUENCE [LARGE SCALE GENOMIC DNA]</scope>
    <source>
        <strain>SDF</strain>
    </source>
</reference>
<proteinExistence type="inferred from homology"/>
<feature type="chain" id="PRO_1000128277" description="Small ribosomal subunit protein uS14">
    <location>
        <begin position="1"/>
        <end position="101"/>
    </location>
</feature>
<organism>
    <name type="scientific">Acinetobacter baumannii (strain SDF)</name>
    <dbReference type="NCBI Taxonomy" id="509170"/>
    <lineage>
        <taxon>Bacteria</taxon>
        <taxon>Pseudomonadati</taxon>
        <taxon>Pseudomonadota</taxon>
        <taxon>Gammaproteobacteria</taxon>
        <taxon>Moraxellales</taxon>
        <taxon>Moraxellaceae</taxon>
        <taxon>Acinetobacter</taxon>
        <taxon>Acinetobacter calcoaceticus/baumannii complex</taxon>
    </lineage>
</organism>
<accession>B0VQT1</accession>